<accession>Q9BJX2</accession>
<accession>Q549F1</accession>
<dbReference type="EMBL" id="AJ277728">
    <property type="protein sequence ID" value="CAC38037.1"/>
    <property type="molecule type" value="mRNA"/>
</dbReference>
<dbReference type="EMBL" id="AF325113">
    <property type="protein sequence ID" value="AAK33068.1"/>
    <property type="molecule type" value="mRNA"/>
</dbReference>
<dbReference type="EMBL" id="AF135818">
    <property type="protein sequence ID" value="AAQ13567.1"/>
    <property type="molecule type" value="mRNA"/>
</dbReference>
<dbReference type="EMBL" id="JQ738413">
    <property type="protein sequence ID" value="AFR43619.1"/>
    <property type="molecule type" value="Genomic_DNA"/>
</dbReference>
<dbReference type="PIR" id="A59321">
    <property type="entry name" value="A59321"/>
</dbReference>
<dbReference type="PIR" id="A59357">
    <property type="entry name" value="A59357"/>
</dbReference>
<dbReference type="SMR" id="Q9BJX2"/>
<dbReference type="GO" id="GO:0005576">
    <property type="term" value="C:extracellular region"/>
    <property type="evidence" value="ECO:0007669"/>
    <property type="project" value="UniProtKB-SubCell"/>
</dbReference>
<dbReference type="GO" id="GO:0015459">
    <property type="term" value="F:potassium channel regulator activity"/>
    <property type="evidence" value="ECO:0007669"/>
    <property type="project" value="UniProtKB-KW"/>
</dbReference>
<dbReference type="GO" id="GO:0090729">
    <property type="term" value="F:toxin activity"/>
    <property type="evidence" value="ECO:0007669"/>
    <property type="project" value="UniProtKB-KW"/>
</dbReference>
<dbReference type="InterPro" id="IPR036574">
    <property type="entry name" value="Scorpion_toxin-like_sf"/>
</dbReference>
<dbReference type="SUPFAM" id="SSF57095">
    <property type="entry name" value="Scorpion toxin-like"/>
    <property type="match status" value="1"/>
</dbReference>
<name>KA143_OLIMR</name>
<keyword id="KW-0903">Direct protein sequencing</keyword>
<keyword id="KW-1015">Disulfide bond</keyword>
<keyword id="KW-0872">Ion channel impairing toxin</keyword>
<keyword id="KW-0528">Neurotoxin</keyword>
<keyword id="KW-0632">Potassium channel impairing toxin</keyword>
<keyword id="KW-0964">Secreted</keyword>
<keyword id="KW-0732">Signal</keyword>
<keyword id="KW-0800">Toxin</keyword>
<protein>
    <recommendedName>
        <fullName>Potassium channel toxin alpha-KTx 14.3</fullName>
    </recommendedName>
    <alternativeName>
        <fullName>BmKK3</fullName>
        <shortName>Kk3</shortName>
    </alternativeName>
    <alternativeName>
        <fullName>Neurotoxin SKTx2</fullName>
    </alternativeName>
    <alternativeName>
        <fullName>Toxin KK2</fullName>
    </alternativeName>
</protein>
<feature type="signal peptide" evidence="2">
    <location>
        <begin position="1"/>
        <end position="23"/>
    </location>
</feature>
<feature type="chain" id="PRO_0000035335" description="Potassium channel toxin alpha-KTx 14.3">
    <location>
        <begin position="24"/>
        <end position="54"/>
    </location>
</feature>
<proteinExistence type="evidence at protein level"/>
<evidence type="ECO:0000250" key="1"/>
<evidence type="ECO:0000269" key="2">
    <source>
    </source>
</evidence>
<evidence type="ECO:0000305" key="3"/>
<comment type="function">
    <text>Potential blocker of potassium channels.</text>
</comment>
<comment type="subcellular location">
    <subcellularLocation>
        <location evidence="2">Secreted</location>
    </subcellularLocation>
</comment>
<comment type="tissue specificity">
    <text evidence="3">Expressed by the venom gland.</text>
</comment>
<comment type="domain">
    <text evidence="3">Has the structural arrangement of an alpha-helix connected to antiparallel beta-sheets by disulfide bonds (CS-alpha/beta).</text>
</comment>
<comment type="PTM">
    <text evidence="1">Contains 3 disulfide bridges.</text>
</comment>
<comment type="mass spectrometry" mass="3313.46" method="Electrospray" evidence="2">
    <text>Monoisotopic mass.</text>
</comment>
<comment type="similarity">
    <text evidence="3">Belongs to the short scorpion toxin superfamily. Potassium channel inhibitor family. Alpha-KTx 14 subfamily.</text>
</comment>
<sequence length="54" mass="5858">MKIFFAILLILAVCSMAIWTVNGTPFEVRCATDADCSRKCPGNPPCRNGFCACT</sequence>
<reference key="1">
    <citation type="journal article" date="2001" name="Biochimie">
        <title>Molecular cloning and characterization of four scorpion K(+)-toxin-like peptides: a new subfamily of venom peptides (alpha-KTx14) and genomic analysis of a member.</title>
        <authorList>
            <person name="Zeng X.-C."/>
            <person name="Peng F."/>
            <person name="Luo F."/>
            <person name="Zhu S.-Y."/>
            <person name="Liu H."/>
            <person name="Li W.-X."/>
        </authorList>
    </citation>
    <scope>NUCLEOTIDE SEQUENCE [MRNA]</scope>
    <source>
        <tissue>Venom gland</tissue>
    </source>
</reference>
<reference key="2">
    <citation type="submission" date="2000-11" db="EMBL/GenBank/DDBJ databases">
        <title>A novel subfamily of potassium channel toxins from Buthus martensii Karsch.</title>
        <authorList>
            <person name="Xu C.-Q."/>
            <person name="Chi C.-W."/>
        </authorList>
    </citation>
    <scope>NUCLEOTIDE SEQUENCE [MRNA]</scope>
</reference>
<reference key="3">
    <citation type="submission" date="1999-03" db="EMBL/GenBank/DDBJ databases">
        <title>A complete cDNA sequence encoding the precursor of a novel toxin (named KK2) active on potassium channels cloned from Buthus martensii Karsch.</title>
        <authorList>
            <person name="Li W.-X."/>
            <person name="Zeng X.-C."/>
            <person name="Zhu S.-Y."/>
        </authorList>
    </citation>
    <scope>NUCLEOTIDE SEQUENCE [MRNA]</scope>
    <source>
        <tissue>Venom gland</tissue>
    </source>
</reference>
<reference key="4">
    <citation type="submission" date="2012-03" db="EMBL/GenBank/DDBJ databases">
        <title>Positive natural selection has driven the intron gain for the K+-channel specific toxin genes from the scorpion Mesobuthus martensii Karsch.</title>
        <authorList>
            <person name="Zeng X.-C."/>
            <person name="Zhang L."/>
            <person name="Luo X."/>
            <person name="Cao H."/>
        </authorList>
    </citation>
    <scope>NUCLEOTIDE SEQUENCE [GENOMIC DNA]</scope>
</reference>
<reference key="5">
    <citation type="journal article" date="2012" name="Proteomics">
        <title>Short-chain peptides identification of scorpion Buthus martensi Karsch venom by employing high orthogonal 2D-HPLC system and tandem mass spectrometry.</title>
        <authorList>
            <person name="Xu J."/>
            <person name="Zhang X."/>
            <person name="Guo Z."/>
            <person name="Yan J."/>
            <person name="Yu L."/>
            <person name="Li X."/>
            <person name="Xue X."/>
            <person name="Liang X."/>
        </authorList>
    </citation>
    <scope>PROTEIN SEQUENCE OF 24-29</scope>
    <scope>SUBCELLULAR LOCATION</scope>
    <scope>MASS SPECTROMETRY</scope>
    <source>
        <tissue>Venom</tissue>
    </source>
</reference>
<organism>
    <name type="scientific">Olivierus martensii</name>
    <name type="common">Manchurian scorpion</name>
    <name type="synonym">Mesobuthus martensii</name>
    <dbReference type="NCBI Taxonomy" id="34649"/>
    <lineage>
        <taxon>Eukaryota</taxon>
        <taxon>Metazoa</taxon>
        <taxon>Ecdysozoa</taxon>
        <taxon>Arthropoda</taxon>
        <taxon>Chelicerata</taxon>
        <taxon>Arachnida</taxon>
        <taxon>Scorpiones</taxon>
        <taxon>Buthida</taxon>
        <taxon>Buthoidea</taxon>
        <taxon>Buthidae</taxon>
        <taxon>Olivierus</taxon>
    </lineage>
</organism>